<proteinExistence type="inferred from homology"/>
<geneLocation type="mitochondrion"/>
<gene>
    <name type="primary">MT-CYB</name>
    <name type="synonym">COB</name>
    <name type="synonym">CYTB</name>
    <name type="synonym">MTCYB</name>
</gene>
<sequence>MINLRKTHPLMKIVNDAFIDLPAPSNISAWWNFGSLLGICLVLQILTGLFLAMHYISDTMMAFSSVAHICRDVNYGWLIRNMHANGASMFFMCLYLHIGRGIYYGSYLYKETWNIGVILLFAIMATAFVGYVLPWGQMSFWGATVITNLLSAIPYIGTTLVEWIWGGFSVDKATLTRFFAFHFILPFVILALVIVHLLFLHETGSNNPSGINPDSDKIPFHPYYTIKDILGLLLMILALLLLAMFSPDTLGDPDNFSPANPLNTPPHIKPEWYFLFAYAILRSIPNKLGGVLALLASILILLIFPLLHTSNQRSLMFRPISQTLFWILTGDLFILTWIGGQPVEQPYIIIGQTASILYFMTIIILMPLAGMIENYMLKPKW</sequence>
<organism>
    <name type="scientific">Lestoros inca</name>
    <name type="common">Incan shrew opossum</name>
    <dbReference type="NCBI Taxonomy" id="42731"/>
    <lineage>
        <taxon>Eukaryota</taxon>
        <taxon>Metazoa</taxon>
        <taxon>Chordata</taxon>
        <taxon>Craniata</taxon>
        <taxon>Vertebrata</taxon>
        <taxon>Euteleostomi</taxon>
        <taxon>Mammalia</taxon>
        <taxon>Metatheria</taxon>
        <taxon>Paucituberculata</taxon>
        <taxon>Caenolestidae</taxon>
        <taxon>Lestoros</taxon>
    </lineage>
</organism>
<accession>Q34893</accession>
<name>CYB_LESIN</name>
<feature type="chain" id="PRO_0000061117" description="Cytochrome b">
    <location>
        <begin position="1"/>
        <end position="381"/>
    </location>
</feature>
<feature type="transmembrane region" description="Helical" evidence="2">
    <location>
        <begin position="33"/>
        <end position="53"/>
    </location>
</feature>
<feature type="transmembrane region" description="Helical" evidence="2">
    <location>
        <begin position="77"/>
        <end position="98"/>
    </location>
</feature>
<feature type="transmembrane region" description="Helical" evidence="2">
    <location>
        <begin position="113"/>
        <end position="133"/>
    </location>
</feature>
<feature type="transmembrane region" description="Helical" evidence="2">
    <location>
        <begin position="178"/>
        <end position="198"/>
    </location>
</feature>
<feature type="transmembrane region" description="Helical" evidence="2">
    <location>
        <begin position="226"/>
        <end position="246"/>
    </location>
</feature>
<feature type="transmembrane region" description="Helical" evidence="2">
    <location>
        <begin position="288"/>
        <end position="308"/>
    </location>
</feature>
<feature type="transmembrane region" description="Helical" evidence="2">
    <location>
        <begin position="320"/>
        <end position="340"/>
    </location>
</feature>
<feature type="transmembrane region" description="Helical" evidence="2">
    <location>
        <begin position="347"/>
        <end position="367"/>
    </location>
</feature>
<feature type="binding site" description="axial binding residue" evidence="2">
    <location>
        <position position="83"/>
    </location>
    <ligand>
        <name>heme b</name>
        <dbReference type="ChEBI" id="CHEBI:60344"/>
        <label>b562</label>
    </ligand>
    <ligandPart>
        <name>Fe</name>
        <dbReference type="ChEBI" id="CHEBI:18248"/>
    </ligandPart>
</feature>
<feature type="binding site" description="axial binding residue" evidence="2">
    <location>
        <position position="97"/>
    </location>
    <ligand>
        <name>heme b</name>
        <dbReference type="ChEBI" id="CHEBI:60344"/>
        <label>b566</label>
    </ligand>
    <ligandPart>
        <name>Fe</name>
        <dbReference type="ChEBI" id="CHEBI:18248"/>
    </ligandPart>
</feature>
<feature type="binding site" description="axial binding residue" evidence="2">
    <location>
        <position position="182"/>
    </location>
    <ligand>
        <name>heme b</name>
        <dbReference type="ChEBI" id="CHEBI:60344"/>
        <label>b562</label>
    </ligand>
    <ligandPart>
        <name>Fe</name>
        <dbReference type="ChEBI" id="CHEBI:18248"/>
    </ligandPart>
</feature>
<feature type="binding site" description="axial binding residue" evidence="2">
    <location>
        <position position="196"/>
    </location>
    <ligand>
        <name>heme b</name>
        <dbReference type="ChEBI" id="CHEBI:60344"/>
        <label>b566</label>
    </ligand>
    <ligandPart>
        <name>Fe</name>
        <dbReference type="ChEBI" id="CHEBI:18248"/>
    </ligandPart>
</feature>
<feature type="binding site" evidence="2">
    <location>
        <position position="201"/>
    </location>
    <ligand>
        <name>a ubiquinone</name>
        <dbReference type="ChEBI" id="CHEBI:16389"/>
    </ligand>
</feature>
<evidence type="ECO:0000250" key="1"/>
<evidence type="ECO:0000250" key="2">
    <source>
        <dbReference type="UniProtKB" id="P00157"/>
    </source>
</evidence>
<evidence type="ECO:0000255" key="3">
    <source>
        <dbReference type="PROSITE-ProRule" id="PRU00967"/>
    </source>
</evidence>
<evidence type="ECO:0000255" key="4">
    <source>
        <dbReference type="PROSITE-ProRule" id="PRU00968"/>
    </source>
</evidence>
<dbReference type="EMBL" id="U34681">
    <property type="protein sequence ID" value="AAA99749.1"/>
    <property type="molecule type" value="Genomic_DNA"/>
</dbReference>
<dbReference type="SMR" id="Q34893"/>
<dbReference type="GO" id="GO:0005743">
    <property type="term" value="C:mitochondrial inner membrane"/>
    <property type="evidence" value="ECO:0007669"/>
    <property type="project" value="UniProtKB-SubCell"/>
</dbReference>
<dbReference type="GO" id="GO:0045275">
    <property type="term" value="C:respiratory chain complex III"/>
    <property type="evidence" value="ECO:0007669"/>
    <property type="project" value="InterPro"/>
</dbReference>
<dbReference type="GO" id="GO:0046872">
    <property type="term" value="F:metal ion binding"/>
    <property type="evidence" value="ECO:0007669"/>
    <property type="project" value="UniProtKB-KW"/>
</dbReference>
<dbReference type="GO" id="GO:0008121">
    <property type="term" value="F:ubiquinol-cytochrome-c reductase activity"/>
    <property type="evidence" value="ECO:0007669"/>
    <property type="project" value="InterPro"/>
</dbReference>
<dbReference type="GO" id="GO:0006122">
    <property type="term" value="P:mitochondrial electron transport, ubiquinol to cytochrome c"/>
    <property type="evidence" value="ECO:0007669"/>
    <property type="project" value="TreeGrafter"/>
</dbReference>
<dbReference type="CDD" id="cd00290">
    <property type="entry name" value="cytochrome_b_C"/>
    <property type="match status" value="1"/>
</dbReference>
<dbReference type="CDD" id="cd00284">
    <property type="entry name" value="Cytochrome_b_N"/>
    <property type="match status" value="1"/>
</dbReference>
<dbReference type="FunFam" id="1.20.810.10:FF:000002">
    <property type="entry name" value="Cytochrome b"/>
    <property type="match status" value="1"/>
</dbReference>
<dbReference type="Gene3D" id="1.20.810.10">
    <property type="entry name" value="Cytochrome Bc1 Complex, Chain C"/>
    <property type="match status" value="1"/>
</dbReference>
<dbReference type="InterPro" id="IPR005798">
    <property type="entry name" value="Cyt_b/b6_C"/>
</dbReference>
<dbReference type="InterPro" id="IPR036150">
    <property type="entry name" value="Cyt_b/b6_C_sf"/>
</dbReference>
<dbReference type="InterPro" id="IPR005797">
    <property type="entry name" value="Cyt_b/b6_N"/>
</dbReference>
<dbReference type="InterPro" id="IPR027387">
    <property type="entry name" value="Cytb/b6-like_sf"/>
</dbReference>
<dbReference type="InterPro" id="IPR030689">
    <property type="entry name" value="Cytochrome_b"/>
</dbReference>
<dbReference type="InterPro" id="IPR048260">
    <property type="entry name" value="Cytochrome_b_C_euk/bac"/>
</dbReference>
<dbReference type="InterPro" id="IPR048259">
    <property type="entry name" value="Cytochrome_b_N_euk/bac"/>
</dbReference>
<dbReference type="InterPro" id="IPR016174">
    <property type="entry name" value="Di-haem_cyt_TM"/>
</dbReference>
<dbReference type="PANTHER" id="PTHR19271">
    <property type="entry name" value="CYTOCHROME B"/>
    <property type="match status" value="1"/>
</dbReference>
<dbReference type="PANTHER" id="PTHR19271:SF16">
    <property type="entry name" value="CYTOCHROME B"/>
    <property type="match status" value="1"/>
</dbReference>
<dbReference type="Pfam" id="PF00032">
    <property type="entry name" value="Cytochrom_B_C"/>
    <property type="match status" value="1"/>
</dbReference>
<dbReference type="Pfam" id="PF00033">
    <property type="entry name" value="Cytochrome_B"/>
    <property type="match status" value="1"/>
</dbReference>
<dbReference type="PIRSF" id="PIRSF038885">
    <property type="entry name" value="COB"/>
    <property type="match status" value="1"/>
</dbReference>
<dbReference type="SUPFAM" id="SSF81648">
    <property type="entry name" value="a domain/subunit of cytochrome bc1 complex (Ubiquinol-cytochrome c reductase)"/>
    <property type="match status" value="1"/>
</dbReference>
<dbReference type="SUPFAM" id="SSF81342">
    <property type="entry name" value="Transmembrane di-heme cytochromes"/>
    <property type="match status" value="1"/>
</dbReference>
<dbReference type="PROSITE" id="PS51003">
    <property type="entry name" value="CYTB_CTER"/>
    <property type="match status" value="1"/>
</dbReference>
<dbReference type="PROSITE" id="PS51002">
    <property type="entry name" value="CYTB_NTER"/>
    <property type="match status" value="1"/>
</dbReference>
<reference key="1">
    <citation type="journal article" date="1996" name="J. Mammal. Evol.">
        <title>Relationships among didelphid marsupials based on sequence variation in the mitochondrial cytochrome b gene.</title>
        <authorList>
            <person name="Patton J.L."/>
            <person name="dos Reis Maria S.F."/>
            <person name="da Silva N.F."/>
        </authorList>
    </citation>
    <scope>NUCLEOTIDE SEQUENCE [GENOMIC DNA]</scope>
</reference>
<protein>
    <recommendedName>
        <fullName>Cytochrome b</fullName>
    </recommendedName>
    <alternativeName>
        <fullName>Complex III subunit 3</fullName>
    </alternativeName>
    <alternativeName>
        <fullName>Complex III subunit III</fullName>
    </alternativeName>
    <alternativeName>
        <fullName>Cytochrome b-c1 complex subunit 3</fullName>
    </alternativeName>
    <alternativeName>
        <fullName>Ubiquinol-cytochrome-c reductase complex cytochrome b subunit</fullName>
    </alternativeName>
</protein>
<keyword id="KW-0249">Electron transport</keyword>
<keyword id="KW-0349">Heme</keyword>
<keyword id="KW-0408">Iron</keyword>
<keyword id="KW-0472">Membrane</keyword>
<keyword id="KW-0479">Metal-binding</keyword>
<keyword id="KW-0496">Mitochondrion</keyword>
<keyword id="KW-0999">Mitochondrion inner membrane</keyword>
<keyword id="KW-0679">Respiratory chain</keyword>
<keyword id="KW-0812">Transmembrane</keyword>
<keyword id="KW-1133">Transmembrane helix</keyword>
<keyword id="KW-0813">Transport</keyword>
<keyword id="KW-0830">Ubiquinone</keyword>
<comment type="function">
    <text evidence="2">Component of the ubiquinol-cytochrome c reductase complex (complex III or cytochrome b-c1 complex) that is part of the mitochondrial respiratory chain. The b-c1 complex mediates electron transfer from ubiquinol to cytochrome c. Contributes to the generation of a proton gradient across the mitochondrial membrane that is then used for ATP synthesis.</text>
</comment>
<comment type="cofactor">
    <cofactor evidence="2">
        <name>heme b</name>
        <dbReference type="ChEBI" id="CHEBI:60344"/>
    </cofactor>
    <text evidence="2">Binds 2 heme b groups non-covalently.</text>
</comment>
<comment type="subunit">
    <text evidence="2">The cytochrome bc1 complex contains 11 subunits: 3 respiratory subunits (MT-CYB, CYC1 and UQCRFS1), 2 core proteins (UQCRC1 and UQCRC2) and 6 low-molecular weight proteins (UQCRH/QCR6, UQCRB/QCR7, UQCRQ/QCR8, UQCR10/QCR9, UQCR11/QCR10 and a cleavage product of UQCRFS1). This cytochrome bc1 complex then forms a dimer.</text>
</comment>
<comment type="subcellular location">
    <subcellularLocation>
        <location evidence="2">Mitochondrion inner membrane</location>
        <topology evidence="2">Multi-pass membrane protein</topology>
    </subcellularLocation>
</comment>
<comment type="miscellaneous">
    <text evidence="1">Heme 1 (or BL or b562) is low-potential and absorbs at about 562 nm, and heme 2 (or BH or b566) is high-potential and absorbs at about 566 nm.</text>
</comment>
<comment type="similarity">
    <text evidence="3 4">Belongs to the cytochrome b family.</text>
</comment>
<comment type="caution">
    <text evidence="2">The full-length protein contains only eight transmembrane helices, not nine as predicted by bioinformatics tools.</text>
</comment>